<feature type="chain" id="PRO_0000065860" description="T-DNA border endonuclease VirD2">
    <location>
        <begin position="1"/>
        <end position="424"/>
    </location>
</feature>
<feature type="region of interest" description="Disordered" evidence="1">
    <location>
        <begin position="206"/>
        <end position="269"/>
    </location>
</feature>
<feature type="region of interest" description="Disordered" evidence="1">
    <location>
        <begin position="321"/>
        <end position="424"/>
    </location>
</feature>
<feature type="compositionally biased region" description="Acidic residues" evidence="1">
    <location>
        <begin position="212"/>
        <end position="221"/>
    </location>
</feature>
<feature type="compositionally biased region" description="Basic and acidic residues" evidence="1">
    <location>
        <begin position="243"/>
        <end position="261"/>
    </location>
</feature>
<feature type="compositionally biased region" description="Basic residues" evidence="1">
    <location>
        <begin position="330"/>
        <end position="339"/>
    </location>
</feature>
<feature type="compositionally biased region" description="Basic and acidic residues" evidence="1">
    <location>
        <begin position="394"/>
        <end position="408"/>
    </location>
</feature>
<feature type="compositionally biased region" description="Basic and acidic residues" evidence="1">
    <location>
        <begin position="415"/>
        <end position="424"/>
    </location>
</feature>
<comment type="function">
    <text>Tumor formation by A.tumefaciens involves the transfer and integration of a defined segment (T-DNA) of Ti plasmid DNA into the plant nuclear genome. The virD operon encodes a site-specific endonuclease that cleaves at a unique site within both 24 bp direct repeats flanking the T-DNA.</text>
</comment>
<comment type="interaction">
    <interactant intactId="EBI-15673566">
        <id>P06668</id>
    </interactant>
    <interactant intactId="EBI-15673556">
        <id>Q7D3V8</id>
        <label>Atu5117</label>
    </interactant>
    <organismsDiffer>true</organismsDiffer>
    <experiments>3</experiments>
</comment>
<dbReference type="EC" id="3.1.-.-"/>
<dbReference type="EMBL" id="AF242881">
    <property type="protein sequence ID" value="AAA98390.1"/>
    <property type="molecule type" value="Genomic_DNA"/>
</dbReference>
<dbReference type="EMBL" id="M17989">
    <property type="protein sequence ID" value="AAA22114.1"/>
    <property type="molecule type" value="Genomic_DNA"/>
</dbReference>
<dbReference type="PIR" id="B29826">
    <property type="entry name" value="B25063"/>
</dbReference>
<dbReference type="RefSeq" id="NP_059814.1">
    <property type="nucleotide sequence ID" value="NC_002377.1"/>
</dbReference>
<dbReference type="RefSeq" id="WP_010892502.1">
    <property type="nucleotide sequence ID" value="NZ_QSNU01000012.1"/>
</dbReference>
<dbReference type="DIP" id="DIP-29956N"/>
<dbReference type="ELM" id="P06668"/>
<dbReference type="IntAct" id="P06668">
    <property type="interactions" value="1"/>
</dbReference>
<dbReference type="OrthoDB" id="98563at2"/>
<dbReference type="GO" id="GO:0004520">
    <property type="term" value="F:DNA endonuclease activity"/>
    <property type="evidence" value="ECO:0007669"/>
    <property type="project" value="InterPro"/>
</dbReference>
<dbReference type="GO" id="GO:0051819">
    <property type="term" value="P:symbiont-mediated induction of tumor or growth in host"/>
    <property type="evidence" value="ECO:0007669"/>
    <property type="project" value="InterPro"/>
</dbReference>
<dbReference type="InterPro" id="IPR005094">
    <property type="entry name" value="Endonuclease_MobA/VirD2"/>
</dbReference>
<dbReference type="InterPro" id="IPR016644">
    <property type="entry name" value="VirD2"/>
</dbReference>
<dbReference type="NCBIfam" id="NF010437">
    <property type="entry name" value="PRK13863.1"/>
    <property type="match status" value="1"/>
</dbReference>
<dbReference type="Pfam" id="PF03432">
    <property type="entry name" value="Relaxase"/>
    <property type="match status" value="1"/>
</dbReference>
<dbReference type="PIRSF" id="PIRSF016095">
    <property type="entry name" value="Endonuclease_VirD2"/>
    <property type="match status" value="1"/>
</dbReference>
<accession>P06668</accession>
<keyword id="KW-0192">Crown gall tumor</keyword>
<keyword id="KW-0255">Endonuclease</keyword>
<keyword id="KW-0378">Hydrolase</keyword>
<keyword id="KW-0540">Nuclease</keyword>
<keyword id="KW-0614">Plasmid</keyword>
<proteinExistence type="evidence at protein level"/>
<name>VIRD2_RHIRD</name>
<geneLocation type="plasmid">
    <name>pTiA6NC</name>
</geneLocation>
<organism>
    <name type="scientific">Rhizobium radiobacter</name>
    <name type="common">Agrobacterium tumefaciens</name>
    <name type="synonym">Agrobacterium radiobacter</name>
    <dbReference type="NCBI Taxonomy" id="358"/>
    <lineage>
        <taxon>Bacteria</taxon>
        <taxon>Pseudomonadati</taxon>
        <taxon>Pseudomonadota</taxon>
        <taxon>Alphaproteobacteria</taxon>
        <taxon>Hyphomicrobiales</taxon>
        <taxon>Rhizobiaceae</taxon>
        <taxon>Rhizobium/Agrobacterium group</taxon>
        <taxon>Agrobacterium</taxon>
        <taxon>Agrobacterium tumefaciens complex</taxon>
    </lineage>
</organism>
<gene>
    <name type="primary">virD2</name>
</gene>
<reference key="1">
    <citation type="journal article" date="1986" name="Cell">
        <title>The virD operon of Agrobacterium tumefaciens encodes a site-specific endonuclease.</title>
        <authorList>
            <person name="Yanofsky M.F."/>
            <person name="Porter S.G."/>
            <person name="Young C."/>
            <person name="Albright L.M."/>
            <person name="Gordon M.P."/>
            <person name="Nester E.W."/>
        </authorList>
    </citation>
    <scope>NUCLEOTIDE SEQUENCE [GENOMIC DNA]</scope>
</reference>
<reference key="2">
    <citation type="journal article" date="1987" name="J. Bacteriol.">
        <title>Double-stranded cleavage of T-DNA and generation of single-stranded T-DNA molecules in Escherichia coli by a virD-encoded border-specific endonuclease from Agrobacterium tumefaciens.</title>
        <authorList>
            <person name="Jayaswal R.K."/>
            <person name="Veluthambi K."/>
            <person name="Gelvin S.B."/>
            <person name="Slightom J.L."/>
        </authorList>
    </citation>
    <scope>NUCLEOTIDE SEQUENCE [GENOMIC DNA]</scope>
</reference>
<evidence type="ECO:0000256" key="1">
    <source>
        <dbReference type="SAM" id="MobiDB-lite"/>
    </source>
</evidence>
<protein>
    <recommendedName>
        <fullName>T-DNA border endonuclease VirD2</fullName>
        <ecNumber>3.1.-.-</ecNumber>
    </recommendedName>
</protein>
<sequence>MPDRAQVIIRIVPGGGTKTLQQIINQLEYLSRKGKLELQRSARHLDIPVPPDQIRELAQSWVTEAGIYDESQSDDDRQQDLTTHIIVSFPAGTDQTAAYEASREWAAEMFGSGYGGGRYNYLTAYHVDRDHPHLHVVVNRRELLGHGWLKISRRHPQLNYDGLRKKMAEISLRHGIVLDATSRAERGIAERPITYAEHRRLERMQAQKIQFEDTDFDETSPEEDRRDLSQSFDPFRSDPSTGEPDRATRHDKQPLEQHARFQESAGSSIKADARIRVSLESERSAQPSASKIPVIGHFGIETSYVAEASVRKRSGIFGTSRPVTDVAMHTVKRQQRSKRRNDEEAGPSGANRKGLKAAQVDSEANVGEQDTRDDSNKAADPVSASIGTEQPEASPKRPRDRHDGELGGRKRARGNRRDDGRGGT</sequence>